<keyword id="KW-0045">Antibiotic biosynthesis</keyword>
<keyword id="KW-0871">Bacteriocin biosynthesis</keyword>
<keyword id="KW-0963">Cytoplasm</keyword>
<keyword id="KW-1185">Reference proteome</keyword>
<feature type="chain" id="PRO_0000049936" description="Sporulation-delaying protein SdpA">
    <location>
        <begin position="1"/>
        <end position="158"/>
    </location>
</feature>
<sequence>MTICFLLFSSYYFSNISPQNPLFKKNFLQQLSPQGFGFYSKSPTEENISFHTKENLKLPNALPNNFFGIKREGRVQAIELGKIVENIDPKNWKTCENNNSCTNLEKQIKPIKVIKNEDYIHLSKGEYLIYRQKPLSWYWIDFKQTTSFERKVLKIKIV</sequence>
<dbReference type="EMBL" id="AB006738">
    <property type="protein sequence ID" value="BAA21900.1"/>
    <property type="molecule type" value="Genomic_DNA"/>
</dbReference>
<dbReference type="EMBL" id="AL009126">
    <property type="protein sequence ID" value="CAB15380.1"/>
    <property type="molecule type" value="Genomic_DNA"/>
</dbReference>
<dbReference type="PIR" id="H70028">
    <property type="entry name" value="H70028"/>
</dbReference>
<dbReference type="RefSeq" id="NP_391255.1">
    <property type="nucleotide sequence ID" value="NC_000964.3"/>
</dbReference>
<dbReference type="RefSeq" id="WP_009968174.1">
    <property type="nucleotide sequence ID" value="NZ_OZ025638.1"/>
</dbReference>
<dbReference type="SMR" id="O34889"/>
<dbReference type="FunCoup" id="O34889">
    <property type="interactions" value="18"/>
</dbReference>
<dbReference type="STRING" id="224308.BSU33750"/>
<dbReference type="TCDB" id="9.A.31.1.1">
    <property type="family name" value="the putative sdpab peptide antibiotic-like killing factor exporter (sdpab) family"/>
</dbReference>
<dbReference type="PaxDb" id="224308-BSU33750"/>
<dbReference type="EnsemblBacteria" id="CAB15380">
    <property type="protein sequence ID" value="CAB15380"/>
    <property type="gene ID" value="BSU_33750"/>
</dbReference>
<dbReference type="GeneID" id="86872020"/>
<dbReference type="GeneID" id="938629"/>
<dbReference type="KEGG" id="bsu:BSU33750"/>
<dbReference type="PATRIC" id="fig|224308.179.peg.3660"/>
<dbReference type="InParanoid" id="O34889"/>
<dbReference type="OrthoDB" id="2891459at2"/>
<dbReference type="BioCyc" id="BSUB:BSU33750-MONOMER"/>
<dbReference type="Proteomes" id="UP000001570">
    <property type="component" value="Chromosome"/>
</dbReference>
<dbReference type="GO" id="GO:0005737">
    <property type="term" value="C:cytoplasm"/>
    <property type="evidence" value="ECO:0007669"/>
    <property type="project" value="UniProtKB-SubCell"/>
</dbReference>
<dbReference type="GO" id="GO:0030152">
    <property type="term" value="P:bacteriocin biosynthetic process"/>
    <property type="evidence" value="ECO:0007669"/>
    <property type="project" value="UniProtKB-KW"/>
</dbReference>
<dbReference type="InterPro" id="IPR023902">
    <property type="entry name" value="Sporulation_SdpA"/>
</dbReference>
<dbReference type="NCBIfam" id="TIGR04034">
    <property type="entry name" value="export_SdpA"/>
    <property type="match status" value="1"/>
</dbReference>
<dbReference type="Pfam" id="PF17418">
    <property type="entry name" value="SdpA"/>
    <property type="match status" value="1"/>
</dbReference>
<reference key="1">
    <citation type="submission" date="1997-08" db="EMBL/GenBank/DDBJ databases">
        <authorList>
            <person name="Nakamura A."/>
            <person name="Grau R."/>
            <person name="Perego M."/>
            <person name="Hoch J.A."/>
        </authorList>
    </citation>
    <scope>NUCLEOTIDE SEQUENCE [GENOMIC DNA]</scope>
    <source>
        <strain>168 / JH642</strain>
    </source>
</reference>
<reference key="2">
    <citation type="journal article" date="1997" name="Nature">
        <title>The complete genome sequence of the Gram-positive bacterium Bacillus subtilis.</title>
        <authorList>
            <person name="Kunst F."/>
            <person name="Ogasawara N."/>
            <person name="Moszer I."/>
            <person name="Albertini A.M."/>
            <person name="Alloni G."/>
            <person name="Azevedo V."/>
            <person name="Bertero M.G."/>
            <person name="Bessieres P."/>
            <person name="Bolotin A."/>
            <person name="Borchert S."/>
            <person name="Borriss R."/>
            <person name="Boursier L."/>
            <person name="Brans A."/>
            <person name="Braun M."/>
            <person name="Brignell S.C."/>
            <person name="Bron S."/>
            <person name="Brouillet S."/>
            <person name="Bruschi C.V."/>
            <person name="Caldwell B."/>
            <person name="Capuano V."/>
            <person name="Carter N.M."/>
            <person name="Choi S.-K."/>
            <person name="Codani J.-J."/>
            <person name="Connerton I.F."/>
            <person name="Cummings N.J."/>
            <person name="Daniel R.A."/>
            <person name="Denizot F."/>
            <person name="Devine K.M."/>
            <person name="Duesterhoeft A."/>
            <person name="Ehrlich S.D."/>
            <person name="Emmerson P.T."/>
            <person name="Entian K.-D."/>
            <person name="Errington J."/>
            <person name="Fabret C."/>
            <person name="Ferrari E."/>
            <person name="Foulger D."/>
            <person name="Fritz C."/>
            <person name="Fujita M."/>
            <person name="Fujita Y."/>
            <person name="Fuma S."/>
            <person name="Galizzi A."/>
            <person name="Galleron N."/>
            <person name="Ghim S.-Y."/>
            <person name="Glaser P."/>
            <person name="Goffeau A."/>
            <person name="Golightly E.J."/>
            <person name="Grandi G."/>
            <person name="Guiseppi G."/>
            <person name="Guy B.J."/>
            <person name="Haga K."/>
            <person name="Haiech J."/>
            <person name="Harwood C.R."/>
            <person name="Henaut A."/>
            <person name="Hilbert H."/>
            <person name="Holsappel S."/>
            <person name="Hosono S."/>
            <person name="Hullo M.-F."/>
            <person name="Itaya M."/>
            <person name="Jones L.-M."/>
            <person name="Joris B."/>
            <person name="Karamata D."/>
            <person name="Kasahara Y."/>
            <person name="Klaerr-Blanchard M."/>
            <person name="Klein C."/>
            <person name="Kobayashi Y."/>
            <person name="Koetter P."/>
            <person name="Koningstein G."/>
            <person name="Krogh S."/>
            <person name="Kumano M."/>
            <person name="Kurita K."/>
            <person name="Lapidus A."/>
            <person name="Lardinois S."/>
            <person name="Lauber J."/>
            <person name="Lazarevic V."/>
            <person name="Lee S.-M."/>
            <person name="Levine A."/>
            <person name="Liu H."/>
            <person name="Masuda S."/>
            <person name="Mauel C."/>
            <person name="Medigue C."/>
            <person name="Medina N."/>
            <person name="Mellado R.P."/>
            <person name="Mizuno M."/>
            <person name="Moestl D."/>
            <person name="Nakai S."/>
            <person name="Noback M."/>
            <person name="Noone D."/>
            <person name="O'Reilly M."/>
            <person name="Ogawa K."/>
            <person name="Ogiwara A."/>
            <person name="Oudega B."/>
            <person name="Park S.-H."/>
            <person name="Parro V."/>
            <person name="Pohl T.M."/>
            <person name="Portetelle D."/>
            <person name="Porwollik S."/>
            <person name="Prescott A.M."/>
            <person name="Presecan E."/>
            <person name="Pujic P."/>
            <person name="Purnelle B."/>
            <person name="Rapoport G."/>
            <person name="Rey M."/>
            <person name="Reynolds S."/>
            <person name="Rieger M."/>
            <person name="Rivolta C."/>
            <person name="Rocha E."/>
            <person name="Roche B."/>
            <person name="Rose M."/>
            <person name="Sadaie Y."/>
            <person name="Sato T."/>
            <person name="Scanlan E."/>
            <person name="Schleich S."/>
            <person name="Schroeter R."/>
            <person name="Scoffone F."/>
            <person name="Sekiguchi J."/>
            <person name="Sekowska A."/>
            <person name="Seror S.J."/>
            <person name="Serror P."/>
            <person name="Shin B.-S."/>
            <person name="Soldo B."/>
            <person name="Sorokin A."/>
            <person name="Tacconi E."/>
            <person name="Takagi T."/>
            <person name="Takahashi H."/>
            <person name="Takemaru K."/>
            <person name="Takeuchi M."/>
            <person name="Tamakoshi A."/>
            <person name="Tanaka T."/>
            <person name="Terpstra P."/>
            <person name="Tognoni A."/>
            <person name="Tosato V."/>
            <person name="Uchiyama S."/>
            <person name="Vandenbol M."/>
            <person name="Vannier F."/>
            <person name="Vassarotti A."/>
            <person name="Viari A."/>
            <person name="Wambutt R."/>
            <person name="Wedler E."/>
            <person name="Wedler H."/>
            <person name="Weitzenegger T."/>
            <person name="Winters P."/>
            <person name="Wipat A."/>
            <person name="Yamamoto H."/>
            <person name="Yamane K."/>
            <person name="Yasumoto K."/>
            <person name="Yata K."/>
            <person name="Yoshida K."/>
            <person name="Yoshikawa H.-F."/>
            <person name="Zumstein E."/>
            <person name="Yoshikawa H."/>
            <person name="Danchin A."/>
        </authorList>
    </citation>
    <scope>NUCLEOTIDE SEQUENCE [LARGE SCALE GENOMIC DNA]</scope>
    <source>
        <strain>168</strain>
    </source>
</reference>
<reference key="3">
    <citation type="journal article" date="2003" name="Science">
        <title>Cannibalism by sporulating bacteria.</title>
        <authorList>
            <person name="Gonzalez-Pastor J.E."/>
            <person name="Hobbs E.C."/>
            <person name="Losick R."/>
        </authorList>
    </citation>
    <scope>REQUIRED FOR SDPC ACTIVITY</scope>
    <scope>INDUCTION</scope>
    <scope>DISRUPTION PHENOTYPE</scope>
    <source>
        <strain>168 / PY79</strain>
    </source>
</reference>
<reference key="4">
    <citation type="journal article" date="2007" name="J. Bacteriol.">
        <title>Abh and AbrB control of Bacillus subtilis antimicrobial gene expression.</title>
        <authorList>
            <person name="Strauch M.A."/>
            <person name="Bobay B.G."/>
            <person name="Cavanagh J."/>
            <person name="Yao F."/>
            <person name="Wilson A."/>
            <person name="Le Breton Y."/>
        </authorList>
    </citation>
    <scope>REPRESSION BY ABRB AND ABH</scope>
</reference>
<reference key="5">
    <citation type="journal article" date="2013" name="J. Bacteriol.">
        <title>Production of the cannibalism toxin SDP is a multistep process that requires SdpA and SdpB.</title>
        <authorList>
            <person name="Perez Morales T.G."/>
            <person name="Ho T.D."/>
            <person name="Liu W.T."/>
            <person name="Dorrestein P.C."/>
            <person name="Ellermeier C.D."/>
        </authorList>
    </citation>
    <scope>FUNCTION</scope>
    <scope>SUBCELLULAR LOCATION</scope>
    <scope>DISRUPTION PHENOTYPE</scope>
    <source>
        <strain>168 / PY79</strain>
    </source>
</reference>
<protein>
    <recommendedName>
        <fullName>Sporulation-delaying protein SdpA</fullName>
    </recommendedName>
</protein>
<accession>O34889</accession>
<name>SDPA_BACSU</name>
<comment type="function">
    <text evidence="1 3">Required for the maturation of SdpC to SDP (PubMed:12817086). Not required for SdpC signal peptide cleavage, secretion from the cell or disulfide bond formation (PubMed:23687264).</text>
</comment>
<comment type="subcellular location">
    <subcellularLocation>
        <location evidence="3">Cytoplasm</location>
    </subcellularLocation>
    <text>A small amount may be associated with the cell membrane (PubMed:23687264).</text>
</comment>
<comment type="induction">
    <text evidence="1 2">By Spo0A during nutrient starvation (PubMed:12817086). Repressed by AbrB during regular growth when nutrients are plentiful, in association with the transcriptional repressor Abh (PubMed:17720793).</text>
</comment>
<comment type="disruption phenotype">
    <text evidence="1 3">When the sdpA-sdpB-sdpC operon is deleted, increased rate of spore formation; a double operon deletion (sdpA-sdpC plus skfA-skfH) makes spores even faster (PubMed:12817086). A single deletion mutant does not have SDP activity (active peptide of sdpC) (PubMed:23687264).</text>
</comment>
<evidence type="ECO:0000269" key="1">
    <source>
    </source>
</evidence>
<evidence type="ECO:0000269" key="2">
    <source>
    </source>
</evidence>
<evidence type="ECO:0000269" key="3">
    <source>
    </source>
</evidence>
<evidence type="ECO:0000303" key="4">
    <source>
    </source>
</evidence>
<gene>
    <name evidence="4" type="primary">sdpA</name>
    <name type="synonym">yvaW</name>
    <name type="ordered locus">BSU33750</name>
</gene>
<organism>
    <name type="scientific">Bacillus subtilis (strain 168)</name>
    <dbReference type="NCBI Taxonomy" id="224308"/>
    <lineage>
        <taxon>Bacteria</taxon>
        <taxon>Bacillati</taxon>
        <taxon>Bacillota</taxon>
        <taxon>Bacilli</taxon>
        <taxon>Bacillales</taxon>
        <taxon>Bacillaceae</taxon>
        <taxon>Bacillus</taxon>
    </lineage>
</organism>
<proteinExistence type="evidence at transcript level"/>